<dbReference type="EC" id="3.2.2.28" evidence="1"/>
<dbReference type="EMBL" id="AL513382">
    <property type="protein sequence ID" value="CAD07737.1"/>
    <property type="molecule type" value="Genomic_DNA"/>
</dbReference>
<dbReference type="EMBL" id="AE014613">
    <property type="protein sequence ID" value="AAO70675.1"/>
    <property type="molecule type" value="Genomic_DNA"/>
</dbReference>
<dbReference type="RefSeq" id="NP_457603.1">
    <property type="nucleotide sequence ID" value="NC_003198.1"/>
</dbReference>
<dbReference type="RefSeq" id="WP_000237776.1">
    <property type="nucleotide sequence ID" value="NZ_WSUR01000003.1"/>
</dbReference>
<dbReference type="SMR" id="Q8XFG2"/>
<dbReference type="STRING" id="220341.gene:17587246"/>
<dbReference type="KEGG" id="stt:t3132"/>
<dbReference type="KEGG" id="sty:STY3391"/>
<dbReference type="PATRIC" id="fig|220341.7.peg.3452"/>
<dbReference type="eggNOG" id="COG3663">
    <property type="taxonomic scope" value="Bacteria"/>
</dbReference>
<dbReference type="HOGENOM" id="CLU_042829_3_1_6"/>
<dbReference type="OMA" id="FWPVLHL"/>
<dbReference type="OrthoDB" id="9799921at2"/>
<dbReference type="Proteomes" id="UP000000541">
    <property type="component" value="Chromosome"/>
</dbReference>
<dbReference type="Proteomes" id="UP000002670">
    <property type="component" value="Chromosome"/>
</dbReference>
<dbReference type="GO" id="GO:0005737">
    <property type="term" value="C:cytoplasm"/>
    <property type="evidence" value="ECO:0007669"/>
    <property type="project" value="UniProtKB-SubCell"/>
</dbReference>
<dbReference type="GO" id="GO:0003677">
    <property type="term" value="F:DNA binding"/>
    <property type="evidence" value="ECO:0007669"/>
    <property type="project" value="UniProtKB-KW"/>
</dbReference>
<dbReference type="GO" id="GO:0008263">
    <property type="term" value="F:pyrimidine-specific mismatch base pair DNA N-glycosylase activity"/>
    <property type="evidence" value="ECO:0007669"/>
    <property type="project" value="UniProtKB-UniRule"/>
</dbReference>
<dbReference type="GO" id="GO:0004844">
    <property type="term" value="F:uracil DNA N-glycosylase activity"/>
    <property type="evidence" value="ECO:0007669"/>
    <property type="project" value="TreeGrafter"/>
</dbReference>
<dbReference type="GO" id="GO:0006285">
    <property type="term" value="P:base-excision repair, AP site formation"/>
    <property type="evidence" value="ECO:0007669"/>
    <property type="project" value="UniProtKB-UniRule"/>
</dbReference>
<dbReference type="CDD" id="cd10028">
    <property type="entry name" value="UDG-F2_TDG_MUG"/>
    <property type="match status" value="1"/>
</dbReference>
<dbReference type="Gene3D" id="3.40.470.10">
    <property type="entry name" value="Uracil-DNA glycosylase-like domain"/>
    <property type="match status" value="1"/>
</dbReference>
<dbReference type="HAMAP" id="MF_01956">
    <property type="entry name" value="MUG"/>
    <property type="match status" value="1"/>
</dbReference>
<dbReference type="InterPro" id="IPR015637">
    <property type="entry name" value="MUG/TDG"/>
</dbReference>
<dbReference type="InterPro" id="IPR023502">
    <property type="entry name" value="MUG_bact"/>
</dbReference>
<dbReference type="InterPro" id="IPR005122">
    <property type="entry name" value="Uracil-DNA_glycosylase-like"/>
</dbReference>
<dbReference type="InterPro" id="IPR036895">
    <property type="entry name" value="Uracil-DNA_glycosylase-like_sf"/>
</dbReference>
<dbReference type="NCBIfam" id="NF007570">
    <property type="entry name" value="PRK10201.1"/>
    <property type="match status" value="1"/>
</dbReference>
<dbReference type="PANTHER" id="PTHR12159">
    <property type="entry name" value="G/T AND G/U MISMATCH-SPECIFIC DNA GLYCOSYLASE"/>
    <property type="match status" value="1"/>
</dbReference>
<dbReference type="PANTHER" id="PTHR12159:SF9">
    <property type="entry name" value="G_T MISMATCH-SPECIFIC THYMINE DNA GLYCOSYLASE"/>
    <property type="match status" value="1"/>
</dbReference>
<dbReference type="Pfam" id="PF03167">
    <property type="entry name" value="UDG"/>
    <property type="match status" value="1"/>
</dbReference>
<dbReference type="SUPFAM" id="SSF52141">
    <property type="entry name" value="Uracil-DNA glycosylase-like"/>
    <property type="match status" value="1"/>
</dbReference>
<protein>
    <recommendedName>
        <fullName evidence="1">G/U mismatch-specific DNA glycosylase</fullName>
        <ecNumber evidence="1">3.2.2.28</ecNumber>
    </recommendedName>
    <alternativeName>
        <fullName evidence="1">Double-strand-specific uracil glycosylase</fullName>
    </alternativeName>
    <alternativeName>
        <fullName evidence="1">Mismatch-specific uracil DNA-glycosylase</fullName>
        <shortName evidence="1">MUG</shortName>
    </alternativeName>
</protein>
<name>MUG_SALTI</name>
<reference key="1">
    <citation type="journal article" date="2001" name="Nature">
        <title>Complete genome sequence of a multiple drug resistant Salmonella enterica serovar Typhi CT18.</title>
        <authorList>
            <person name="Parkhill J."/>
            <person name="Dougan G."/>
            <person name="James K.D."/>
            <person name="Thomson N.R."/>
            <person name="Pickard D."/>
            <person name="Wain J."/>
            <person name="Churcher C.M."/>
            <person name="Mungall K.L."/>
            <person name="Bentley S.D."/>
            <person name="Holden M.T.G."/>
            <person name="Sebaihia M."/>
            <person name="Baker S."/>
            <person name="Basham D."/>
            <person name="Brooks K."/>
            <person name="Chillingworth T."/>
            <person name="Connerton P."/>
            <person name="Cronin A."/>
            <person name="Davis P."/>
            <person name="Davies R.M."/>
            <person name="Dowd L."/>
            <person name="White N."/>
            <person name="Farrar J."/>
            <person name="Feltwell T."/>
            <person name="Hamlin N."/>
            <person name="Haque A."/>
            <person name="Hien T.T."/>
            <person name="Holroyd S."/>
            <person name="Jagels K."/>
            <person name="Krogh A."/>
            <person name="Larsen T.S."/>
            <person name="Leather S."/>
            <person name="Moule S."/>
            <person name="O'Gaora P."/>
            <person name="Parry C."/>
            <person name="Quail M.A."/>
            <person name="Rutherford K.M."/>
            <person name="Simmonds M."/>
            <person name="Skelton J."/>
            <person name="Stevens K."/>
            <person name="Whitehead S."/>
            <person name="Barrell B.G."/>
        </authorList>
    </citation>
    <scope>NUCLEOTIDE SEQUENCE [LARGE SCALE GENOMIC DNA]</scope>
    <source>
        <strain>CT18</strain>
    </source>
</reference>
<reference key="2">
    <citation type="journal article" date="2003" name="J. Bacteriol.">
        <title>Comparative genomics of Salmonella enterica serovar Typhi strains Ty2 and CT18.</title>
        <authorList>
            <person name="Deng W."/>
            <person name="Liou S.-R."/>
            <person name="Plunkett G. III"/>
            <person name="Mayhew G.F."/>
            <person name="Rose D.J."/>
            <person name="Burland V."/>
            <person name="Kodoyianni V."/>
            <person name="Schwartz D.C."/>
            <person name="Blattner F.R."/>
        </authorList>
    </citation>
    <scope>NUCLEOTIDE SEQUENCE [LARGE SCALE GENOMIC DNA]</scope>
    <source>
        <strain>ATCC 700931 / Ty2</strain>
    </source>
</reference>
<keyword id="KW-0963">Cytoplasm</keyword>
<keyword id="KW-0227">DNA damage</keyword>
<keyword id="KW-0228">DNA excision</keyword>
<keyword id="KW-0234">DNA repair</keyword>
<keyword id="KW-0238">DNA-binding</keyword>
<keyword id="KW-0378">Hydrolase</keyword>
<gene>
    <name evidence="1" type="primary">mug</name>
    <name type="ordered locus">STY3391</name>
    <name type="ordered locus">t3132</name>
</gene>
<sequence length="168" mass="18650">MVKDILAPGLRVVFCGINPGLSSANTGFPFAHPANRFWKVIHLAGFTDRQLKPEEAEKLLDFRCGVTKLVDRPTVQATEVKLHELRSGGRNLIEKIEDYQPAALAVLGKQAFEQGFSQRGIAWGKQKIAIGATMVWVLPNPSGLNRIKTEKLVEAYRELDQALIMRGL</sequence>
<evidence type="ECO:0000255" key="1">
    <source>
        <dbReference type="HAMAP-Rule" id="MF_01956"/>
    </source>
</evidence>
<accession>Q8XFG2</accession>
<accession>Q7AM89</accession>
<comment type="function">
    <text evidence="1">Excises ethenocytosine and uracil, which can arise by alkylation or deamination of cytosine, respectively, from the corresponding mispairs with guanine in ds-DNA. It is capable of hydrolyzing the carbon-nitrogen bond between the sugar-phosphate backbone of the DNA and the mispaired base. The complementary strand guanine functions in substrate recognition. Required for DNA damage lesion repair in stationary-phase cells.</text>
</comment>
<comment type="catalytic activity">
    <reaction evidence="1">
        <text>Specifically hydrolyzes mismatched double-stranded DNA and polynucleotides, releasing free uracil.</text>
        <dbReference type="EC" id="3.2.2.28"/>
    </reaction>
</comment>
<comment type="subunit">
    <text evidence="1">Binds DNA as a monomer.</text>
</comment>
<comment type="subcellular location">
    <subcellularLocation>
        <location evidence="1">Cytoplasm</location>
    </subcellularLocation>
</comment>
<comment type="similarity">
    <text evidence="1">Belongs to the uracil-DNA glycosylase (UDG) superfamily. TDG/mug family.</text>
</comment>
<organism>
    <name type="scientific">Salmonella typhi</name>
    <dbReference type="NCBI Taxonomy" id="90370"/>
    <lineage>
        <taxon>Bacteria</taxon>
        <taxon>Pseudomonadati</taxon>
        <taxon>Pseudomonadota</taxon>
        <taxon>Gammaproteobacteria</taxon>
        <taxon>Enterobacterales</taxon>
        <taxon>Enterobacteriaceae</taxon>
        <taxon>Salmonella</taxon>
    </lineage>
</organism>
<proteinExistence type="inferred from homology"/>
<feature type="chain" id="PRO_0000238683" description="G/U mismatch-specific DNA glycosylase">
    <location>
        <begin position="1"/>
        <end position="168"/>
    </location>
</feature>